<keyword id="KW-0157">Chromophore</keyword>
<keyword id="KW-0472">Membrane</keyword>
<keyword id="KW-0600">Photoreceptor protein</keyword>
<keyword id="KW-0675">Receptor</keyword>
<keyword id="KW-1185">Reference proteome</keyword>
<keyword id="KW-0681">Retinal protein</keyword>
<keyword id="KW-0716">Sensory transduction</keyword>
<keyword id="KW-0812">Transmembrane</keyword>
<keyword id="KW-1133">Transmembrane helix</keyword>
<gene>
    <name type="primary">xop2</name>
    <name type="synonym">sop3</name>
    <name type="ordered locus">rrnAC0559</name>
</gene>
<name>BACS3_HALMA</name>
<evidence type="ECO:0000250" key="1"/>
<evidence type="ECO:0000255" key="2"/>
<evidence type="ECO:0000269" key="3">
    <source>
    </source>
</evidence>
<evidence type="ECO:0000269" key="4">
    <source>
    </source>
</evidence>
<evidence type="ECO:0000305" key="5"/>
<comment type="function">
    <text evidence="3 4">Sensory rhodopsin. Associates with an unusual transducer lacking a methyl-accepting transducer domain found in all other photosensory transducers. The chromophore is all-trans-retinal in the dark.</text>
</comment>
<comment type="biophysicochemical properties">
    <absorption>
        <max evidence="3 4">506 nm</max>
    </absorption>
</comment>
<comment type="subunit">
    <text evidence="3">Interacts with HtrM.</text>
</comment>
<comment type="subcellular location">
    <subcellularLocation>
        <location evidence="5">Membrane</location>
        <topology evidence="5">Multi-pass membrane protein</topology>
    </subcellularLocation>
</comment>
<comment type="induction">
    <text evidence="3">Expressed constitutively throughout the growth phases, both in presence and absence of white light.</text>
</comment>
<comment type="PTM">
    <text evidence="1">The covalent binding of retinal to the apoprotein, bacterioopsin, generates bacteriorhodopsin.</text>
</comment>
<comment type="similarity">
    <text evidence="5">Belongs to the archaeal/bacterial/fungal opsin family.</text>
</comment>
<sequence length="232" mass="25084">MAQEIVWYGAGAGAFFVSAVVFVWFAATRGNIRSSFYYLPPIHTSVAGAAYVAMALIAGGQLGDTVSITTLRFADWIVSTPIITYYLARLAGVDTQTRRLAVAANVVMIGVGYGFVSMSGSLRWIAFAVSTVAFIGLLYLYIKTFARKINAATASVRSLFQSLRDLTVVTWSLYPVVYFLGPLGTGIIQAPDLNFLVAVLDTIAKVGFMSILLVRYNSVETFVDSWSVAPAK</sequence>
<proteinExistence type="evidence at protein level"/>
<accession>Q5V4H7</accession>
<dbReference type="EMBL" id="AY596297">
    <property type="protein sequence ID" value="AAV45575.1"/>
    <property type="molecule type" value="Genomic_DNA"/>
</dbReference>
<dbReference type="RefSeq" id="WP_004962072.1">
    <property type="nucleotide sequence ID" value="NZ_CP039138.1"/>
</dbReference>
<dbReference type="SMR" id="Q5V4H7"/>
<dbReference type="STRING" id="272569.rrnAC0559"/>
<dbReference type="TCDB" id="3.E.1.3.4">
    <property type="family name" value="the ion-translocating microbial rhodopsin (mr) family"/>
</dbReference>
<dbReference type="PaxDb" id="272569-rrnAC0559"/>
<dbReference type="EnsemblBacteria" id="AAV45575">
    <property type="protein sequence ID" value="AAV45575"/>
    <property type="gene ID" value="rrnAC0559"/>
</dbReference>
<dbReference type="GeneID" id="64822726"/>
<dbReference type="KEGG" id="hma:rrnAC0559"/>
<dbReference type="PATRIC" id="fig|272569.17.peg.1323"/>
<dbReference type="eggNOG" id="arCOG02810">
    <property type="taxonomic scope" value="Archaea"/>
</dbReference>
<dbReference type="HOGENOM" id="CLU_054785_5_1_2"/>
<dbReference type="Proteomes" id="UP000001169">
    <property type="component" value="Chromosome I"/>
</dbReference>
<dbReference type="GO" id="GO:0016020">
    <property type="term" value="C:membrane"/>
    <property type="evidence" value="ECO:0007669"/>
    <property type="project" value="UniProtKB-SubCell"/>
</dbReference>
<dbReference type="GO" id="GO:0009881">
    <property type="term" value="F:photoreceptor activity"/>
    <property type="evidence" value="ECO:0007669"/>
    <property type="project" value="UniProtKB-KW"/>
</dbReference>
<dbReference type="GO" id="GO:0007602">
    <property type="term" value="P:phototransduction"/>
    <property type="evidence" value="ECO:0007669"/>
    <property type="project" value="UniProtKB-KW"/>
</dbReference>
<dbReference type="CDD" id="cd15029">
    <property type="entry name" value="7tm_SRI_SRII"/>
    <property type="match status" value="1"/>
</dbReference>
<dbReference type="Gene3D" id="1.20.1070.10">
    <property type="entry name" value="Rhodopsin 7-helix transmembrane proteins"/>
    <property type="match status" value="1"/>
</dbReference>
<dbReference type="InterPro" id="IPR001425">
    <property type="entry name" value="Arc/bac/fun_rhodopsins"/>
</dbReference>
<dbReference type="PANTHER" id="PTHR28286">
    <property type="match status" value="1"/>
</dbReference>
<dbReference type="PANTHER" id="PTHR28286:SF2">
    <property type="entry name" value="BACTERIORHODOPSIN _OPSIN, NOPA (EUROFUNG)"/>
    <property type="match status" value="1"/>
</dbReference>
<dbReference type="Pfam" id="PF01036">
    <property type="entry name" value="Bac_rhodopsin"/>
    <property type="match status" value="1"/>
</dbReference>
<dbReference type="PRINTS" id="PR00251">
    <property type="entry name" value="BACTRLOPSIN"/>
</dbReference>
<dbReference type="SMART" id="SM01021">
    <property type="entry name" value="Bac_rhodopsin"/>
    <property type="match status" value="1"/>
</dbReference>
<dbReference type="SUPFAM" id="SSF81321">
    <property type="entry name" value="Family A G protein-coupled receptor-like"/>
    <property type="match status" value="1"/>
</dbReference>
<feature type="chain" id="PRO_0000428855" description="Sensory rhodopsin III">
    <location>
        <begin position="1"/>
        <end position="232"/>
    </location>
</feature>
<feature type="transmembrane region" description="Helical" evidence="2">
    <location>
        <begin position="5"/>
        <end position="25"/>
    </location>
</feature>
<feature type="transmembrane region" description="Helical" evidence="2">
    <location>
        <begin position="39"/>
        <end position="59"/>
    </location>
</feature>
<feature type="transmembrane region" description="Helical" evidence="2">
    <location>
        <begin position="73"/>
        <end position="93"/>
    </location>
</feature>
<feature type="transmembrane region" description="Helical" evidence="2">
    <location>
        <begin position="100"/>
        <end position="120"/>
    </location>
</feature>
<feature type="transmembrane region" description="Helical" evidence="2">
    <location>
        <begin position="125"/>
        <end position="145"/>
    </location>
</feature>
<feature type="transmembrane region" description="Helical" evidence="2">
    <location>
        <begin position="168"/>
        <end position="188"/>
    </location>
</feature>
<feature type="transmembrane region" description="Helical" evidence="2">
    <location>
        <begin position="194"/>
        <end position="214"/>
    </location>
</feature>
<feature type="site" description="Primary proton acceptor" evidence="1">
    <location>
        <position position="75"/>
    </location>
</feature>
<feature type="modified residue" description="N6-(retinylidene)lysine" evidence="1">
    <location>
        <position position="205"/>
    </location>
</feature>
<protein>
    <recommendedName>
        <fullName>Sensory rhodopsin III</fullName>
        <shortName>HmSRIII</shortName>
    </recommendedName>
    <alternativeName>
        <fullName>Opsin</fullName>
    </alternativeName>
    <alternativeName>
        <fullName>Sensory-like rhodopsin</fullName>
        <shortName>HmSMR</shortName>
    </alternativeName>
</protein>
<organism>
    <name type="scientific">Haloarcula marismortui (strain ATCC 43049 / DSM 3752 / JCM 8966 / VKM B-1809)</name>
    <name type="common">Halobacterium marismortui</name>
    <dbReference type="NCBI Taxonomy" id="272569"/>
    <lineage>
        <taxon>Archaea</taxon>
        <taxon>Methanobacteriati</taxon>
        <taxon>Methanobacteriota</taxon>
        <taxon>Stenosarchaea group</taxon>
        <taxon>Halobacteria</taxon>
        <taxon>Halobacteriales</taxon>
        <taxon>Haloarculaceae</taxon>
        <taxon>Haloarcula</taxon>
    </lineage>
</organism>
<reference key="1">
    <citation type="journal article" date="2004" name="Genome Res.">
        <title>Genome sequence of Haloarcula marismortui: a halophilic archaeon from the Dead Sea.</title>
        <authorList>
            <person name="Baliga N.S."/>
            <person name="Bonneau R."/>
            <person name="Facciotti M.T."/>
            <person name="Pan M."/>
            <person name="Glusman G."/>
            <person name="Deutsch E.W."/>
            <person name="Shannon P."/>
            <person name="Chiu Y."/>
            <person name="Weng R.S."/>
            <person name="Gan R.R."/>
            <person name="Hung P."/>
            <person name="Date S.V."/>
            <person name="Marcotte E."/>
            <person name="Hood L."/>
            <person name="Ng W.V."/>
        </authorList>
    </citation>
    <scope>NUCLEOTIDE SEQUENCE [LARGE SCALE GENOMIC DNA]</scope>
    <source>
        <strain>ATCC 43049 / DSM 3752 / JCM 8966 / VKM B-1809</strain>
    </source>
</reference>
<reference key="2">
    <citation type="journal article" date="2010" name="J. Bacteriol.">
        <title>A novel six-rhodopsin system in a single archaeon.</title>
        <authorList>
            <person name="Fu H.Y."/>
            <person name="Lin Y.C."/>
            <person name="Chang Y.N."/>
            <person name="Tseng H."/>
            <person name="Huang C.C."/>
            <person name="Liu K.C."/>
            <person name="Huang C.S."/>
            <person name="Su C.W."/>
            <person name="Weng R.R."/>
            <person name="Lee Y.Y."/>
            <person name="Ng W.V."/>
            <person name="Yang C.S."/>
        </authorList>
    </citation>
    <scope>FUNCTION</scope>
    <scope>INDUCTION</scope>
    <scope>CHARACTERIZATION</scope>
    <scope>BIOPHYSICOCHEMICAL PROPERTIES</scope>
    <scope>INTERACTION WITH HTRM</scope>
</reference>
<reference key="3">
    <citation type="journal article" date="2011" name="J. Photochem. Photobiol. B">
        <title>Photochemistry of a putative new class of sensory rhodopsin (SRIII) coded by xop2 of Haloarcular marismortui.</title>
        <authorList>
            <person name="Nakao Y."/>
            <person name="Kikukawa T."/>
            <person name="Shimono K."/>
            <person name="Tamogami J."/>
            <person name="Kimitsuki N."/>
            <person name="Nara T."/>
            <person name="Unno M."/>
            <person name="Ihara K."/>
            <person name="Kamo N."/>
        </authorList>
    </citation>
    <scope>FUNCTION</scope>
    <scope>BIOPHYSICOCHEMICAL PROPERTIES</scope>
    <scope>NOMENCLATURE</scope>
</reference>